<name>CCA_ECO8A</name>
<organism>
    <name type="scientific">Escherichia coli O8 (strain IAI1)</name>
    <dbReference type="NCBI Taxonomy" id="585034"/>
    <lineage>
        <taxon>Bacteria</taxon>
        <taxon>Pseudomonadati</taxon>
        <taxon>Pseudomonadota</taxon>
        <taxon>Gammaproteobacteria</taxon>
        <taxon>Enterobacterales</taxon>
        <taxon>Enterobacteriaceae</taxon>
        <taxon>Escherichia</taxon>
    </lineage>
</organism>
<gene>
    <name evidence="1" type="primary">cca</name>
    <name type="ordered locus">ECIAI1_3204</name>
</gene>
<accession>B7LZK6</accession>
<evidence type="ECO:0000255" key="1">
    <source>
        <dbReference type="HAMAP-Rule" id="MF_01261"/>
    </source>
</evidence>
<comment type="function">
    <text evidence="1">Catalyzes the addition and repair of the essential 3'-terminal CCA sequence in tRNAs without using a nucleic acid template. Adds these three nucleotides in the order of C, C, and A to the tRNA nucleotide-73, using CTP and ATP as substrates and producing inorganic pyrophosphate. tRNA 3'-terminal CCA addition is required both for tRNA processing and repair. Also involved in tRNA surveillance by mediating tandem CCA addition to generate a CCACCA at the 3' terminus of unstable tRNAs. While stable tRNAs receive only 3'-terminal CCA, unstable tRNAs are marked with CCACCA and rapidly degraded.</text>
</comment>
<comment type="catalytic activity">
    <reaction evidence="1">
        <text>a tRNA precursor + 2 CTP + ATP = a tRNA with a 3' CCA end + 3 diphosphate</text>
        <dbReference type="Rhea" id="RHEA:14433"/>
        <dbReference type="Rhea" id="RHEA-COMP:10465"/>
        <dbReference type="Rhea" id="RHEA-COMP:10468"/>
        <dbReference type="ChEBI" id="CHEBI:30616"/>
        <dbReference type="ChEBI" id="CHEBI:33019"/>
        <dbReference type="ChEBI" id="CHEBI:37563"/>
        <dbReference type="ChEBI" id="CHEBI:74896"/>
        <dbReference type="ChEBI" id="CHEBI:83071"/>
        <dbReference type="EC" id="2.7.7.72"/>
    </reaction>
</comment>
<comment type="catalytic activity">
    <reaction evidence="1">
        <text>a tRNA with a 3' CCA end + 2 CTP + ATP = a tRNA with a 3' CCACCA end + 3 diphosphate</text>
        <dbReference type="Rhea" id="RHEA:76235"/>
        <dbReference type="Rhea" id="RHEA-COMP:10468"/>
        <dbReference type="Rhea" id="RHEA-COMP:18655"/>
        <dbReference type="ChEBI" id="CHEBI:30616"/>
        <dbReference type="ChEBI" id="CHEBI:33019"/>
        <dbReference type="ChEBI" id="CHEBI:37563"/>
        <dbReference type="ChEBI" id="CHEBI:83071"/>
        <dbReference type="ChEBI" id="CHEBI:195187"/>
    </reaction>
    <physiologicalReaction direction="left-to-right" evidence="1">
        <dbReference type="Rhea" id="RHEA:76236"/>
    </physiologicalReaction>
</comment>
<comment type="cofactor">
    <cofactor evidence="1">
        <name>Mg(2+)</name>
        <dbReference type="ChEBI" id="CHEBI:18420"/>
    </cofactor>
    <text evidence="1">Magnesium is required for nucleotidyltransferase activity.</text>
</comment>
<comment type="cofactor">
    <cofactor evidence="1">
        <name>Ni(2+)</name>
        <dbReference type="ChEBI" id="CHEBI:49786"/>
    </cofactor>
    <text evidence="1">Nickel for phosphatase activity.</text>
</comment>
<comment type="subunit">
    <text evidence="1">Monomer. Can also form homodimers and oligomers.</text>
</comment>
<comment type="domain">
    <text evidence="1">Comprises two domains: an N-terminal domain containing the nucleotidyltransferase activity and a C-terminal HD domain associated with both phosphodiesterase and phosphatase activities.</text>
</comment>
<comment type="miscellaneous">
    <text evidence="1">A single active site specifically recognizes both ATP and CTP and is responsible for their addition.</text>
</comment>
<comment type="similarity">
    <text evidence="1">Belongs to the tRNA nucleotidyltransferase/poly(A) polymerase family. Bacterial CCA-adding enzyme type 1 subfamily.</text>
</comment>
<proteinExistence type="inferred from homology"/>
<sequence>MKIYLVGGAVRDALLGLPVKDRDWVVVGSTPQEMLDAGYQQVGRDFPVFLHPQTHEEYALARTERKSGSGYTGFTCYAAPDVTLEDDLKRRDLTINALAQDDNGEIIDPYNGLGDLQNRLLRHVSPAFGEDPLRVLRVARFAARYAHLGFRIADETLTLMREMTHAGELEHLTPERVWKETESALTTRNPQVFFQVLRDCGALRVLFPEIDALFGVPAPARWHPEIDTGIHTLMTLSMAAMLSPQVDVRFATLCHDLGKGLTPPELWPRHHGHGPAGVKLVEQLCQRLRVPNEIRDLARLVAEFHDLIHTFPMLNPKTIVKLFDSIDAWRKPQRVEQLALTSEADVRGRTGFESADYPQGRWLREAWEVAQSVPTKAVVEAGFKGVEIREELTRRRIAAVASWKEQRCPKPD</sequence>
<protein>
    <recommendedName>
        <fullName evidence="1">Multifunctional CCA protein</fullName>
    </recommendedName>
    <domain>
        <recommendedName>
            <fullName evidence="1">CCA-adding enzyme</fullName>
            <ecNumber evidence="1">2.7.7.72</ecNumber>
        </recommendedName>
        <alternativeName>
            <fullName evidence="1">CCA tRNA nucleotidyltransferase</fullName>
        </alternativeName>
        <alternativeName>
            <fullName evidence="1">tRNA CCA-pyrophosphorylase</fullName>
        </alternativeName>
        <alternativeName>
            <fullName evidence="1">tRNA adenylyl-/cytidylyl-transferase</fullName>
        </alternativeName>
        <alternativeName>
            <fullName evidence="1">tRNA nucleotidyltransferase</fullName>
        </alternativeName>
        <alternativeName>
            <fullName evidence="1">tRNA-NT</fullName>
        </alternativeName>
    </domain>
    <domain>
        <recommendedName>
            <fullName evidence="1">2'-nucleotidase</fullName>
            <ecNumber evidence="1">3.1.3.-</ecNumber>
        </recommendedName>
    </domain>
    <domain>
        <recommendedName>
            <fullName evidence="1">2',3'-cyclic phosphodiesterase</fullName>
            <ecNumber evidence="1">3.1.4.-</ecNumber>
        </recommendedName>
    </domain>
    <domain>
        <recommendedName>
            <fullName evidence="1">Phosphatase</fullName>
            <ecNumber evidence="1">3.1.3.-</ecNumber>
        </recommendedName>
    </domain>
</protein>
<dbReference type="EC" id="2.7.7.72" evidence="1"/>
<dbReference type="EC" id="3.1.3.-" evidence="1"/>
<dbReference type="EC" id="3.1.4.-" evidence="1"/>
<dbReference type="EMBL" id="CU928160">
    <property type="protein sequence ID" value="CAR00018.1"/>
    <property type="molecule type" value="Genomic_DNA"/>
</dbReference>
<dbReference type="RefSeq" id="WP_000708501.1">
    <property type="nucleotide sequence ID" value="NC_011741.1"/>
</dbReference>
<dbReference type="SMR" id="B7LZK6"/>
<dbReference type="KEGG" id="ecr:ECIAI1_3204"/>
<dbReference type="HOGENOM" id="CLU_015961_1_1_6"/>
<dbReference type="GO" id="GO:0005524">
    <property type="term" value="F:ATP binding"/>
    <property type="evidence" value="ECO:0007669"/>
    <property type="project" value="UniProtKB-UniRule"/>
</dbReference>
<dbReference type="GO" id="GO:0004810">
    <property type="term" value="F:CCA tRNA nucleotidyltransferase activity"/>
    <property type="evidence" value="ECO:0007669"/>
    <property type="project" value="UniProtKB-UniRule"/>
</dbReference>
<dbReference type="GO" id="GO:0004112">
    <property type="term" value="F:cyclic-nucleotide phosphodiesterase activity"/>
    <property type="evidence" value="ECO:0007669"/>
    <property type="project" value="UniProtKB-UniRule"/>
</dbReference>
<dbReference type="GO" id="GO:0000287">
    <property type="term" value="F:magnesium ion binding"/>
    <property type="evidence" value="ECO:0007669"/>
    <property type="project" value="UniProtKB-UniRule"/>
</dbReference>
<dbReference type="GO" id="GO:0016791">
    <property type="term" value="F:phosphatase activity"/>
    <property type="evidence" value="ECO:0007669"/>
    <property type="project" value="UniProtKB-UniRule"/>
</dbReference>
<dbReference type="GO" id="GO:0000049">
    <property type="term" value="F:tRNA binding"/>
    <property type="evidence" value="ECO:0007669"/>
    <property type="project" value="UniProtKB-UniRule"/>
</dbReference>
<dbReference type="GO" id="GO:0042245">
    <property type="term" value="P:RNA repair"/>
    <property type="evidence" value="ECO:0007669"/>
    <property type="project" value="UniProtKB-KW"/>
</dbReference>
<dbReference type="GO" id="GO:0001680">
    <property type="term" value="P:tRNA 3'-terminal CCA addition"/>
    <property type="evidence" value="ECO:0007669"/>
    <property type="project" value="UniProtKB-UniRule"/>
</dbReference>
<dbReference type="CDD" id="cd00077">
    <property type="entry name" value="HDc"/>
    <property type="match status" value="1"/>
</dbReference>
<dbReference type="CDD" id="cd05398">
    <property type="entry name" value="NT_ClassII-CCAase"/>
    <property type="match status" value="1"/>
</dbReference>
<dbReference type="FunFam" id="1.10.3090.10:FF:000001">
    <property type="entry name" value="Multifunctional CCA protein"/>
    <property type="match status" value="1"/>
</dbReference>
<dbReference type="FunFam" id="3.30.460.10:FF:000016">
    <property type="entry name" value="Multifunctional CCA protein"/>
    <property type="match status" value="1"/>
</dbReference>
<dbReference type="Gene3D" id="3.30.460.10">
    <property type="entry name" value="Beta Polymerase, domain 2"/>
    <property type="match status" value="1"/>
</dbReference>
<dbReference type="Gene3D" id="1.10.3090.10">
    <property type="entry name" value="cca-adding enzyme, domain 2"/>
    <property type="match status" value="1"/>
</dbReference>
<dbReference type="HAMAP" id="MF_01261">
    <property type="entry name" value="CCA_bact_type1"/>
    <property type="match status" value="1"/>
</dbReference>
<dbReference type="HAMAP" id="MF_01262">
    <property type="entry name" value="CCA_bact_type2"/>
    <property type="match status" value="1"/>
</dbReference>
<dbReference type="InterPro" id="IPR012006">
    <property type="entry name" value="CCA_bact"/>
</dbReference>
<dbReference type="InterPro" id="IPR003607">
    <property type="entry name" value="HD/PDEase_dom"/>
</dbReference>
<dbReference type="InterPro" id="IPR006674">
    <property type="entry name" value="HD_domain"/>
</dbReference>
<dbReference type="InterPro" id="IPR043519">
    <property type="entry name" value="NT_sf"/>
</dbReference>
<dbReference type="InterPro" id="IPR002646">
    <property type="entry name" value="PolA_pol_head_dom"/>
</dbReference>
<dbReference type="InterPro" id="IPR032828">
    <property type="entry name" value="PolyA_RNA-bd"/>
</dbReference>
<dbReference type="InterPro" id="IPR050124">
    <property type="entry name" value="tRNA_CCA-adding_enzyme"/>
</dbReference>
<dbReference type="NCBIfam" id="NF008137">
    <property type="entry name" value="PRK10885.1"/>
    <property type="match status" value="1"/>
</dbReference>
<dbReference type="PANTHER" id="PTHR47545">
    <property type="entry name" value="MULTIFUNCTIONAL CCA PROTEIN"/>
    <property type="match status" value="1"/>
</dbReference>
<dbReference type="PANTHER" id="PTHR47545:SF1">
    <property type="entry name" value="MULTIFUNCTIONAL CCA PROTEIN"/>
    <property type="match status" value="1"/>
</dbReference>
<dbReference type="Pfam" id="PF01966">
    <property type="entry name" value="HD"/>
    <property type="match status" value="1"/>
</dbReference>
<dbReference type="Pfam" id="PF01743">
    <property type="entry name" value="PolyA_pol"/>
    <property type="match status" value="1"/>
</dbReference>
<dbReference type="Pfam" id="PF12627">
    <property type="entry name" value="PolyA_pol_RNAbd"/>
    <property type="match status" value="1"/>
</dbReference>
<dbReference type="PIRSF" id="PIRSF000813">
    <property type="entry name" value="CCA_bact"/>
    <property type="match status" value="1"/>
</dbReference>
<dbReference type="SUPFAM" id="SSF81301">
    <property type="entry name" value="Nucleotidyltransferase"/>
    <property type="match status" value="1"/>
</dbReference>
<dbReference type="SUPFAM" id="SSF81891">
    <property type="entry name" value="Poly A polymerase C-terminal region-like"/>
    <property type="match status" value="1"/>
</dbReference>
<dbReference type="PROSITE" id="PS51831">
    <property type="entry name" value="HD"/>
    <property type="match status" value="1"/>
</dbReference>
<reference key="1">
    <citation type="journal article" date="2009" name="PLoS Genet.">
        <title>Organised genome dynamics in the Escherichia coli species results in highly diverse adaptive paths.</title>
        <authorList>
            <person name="Touchon M."/>
            <person name="Hoede C."/>
            <person name="Tenaillon O."/>
            <person name="Barbe V."/>
            <person name="Baeriswyl S."/>
            <person name="Bidet P."/>
            <person name="Bingen E."/>
            <person name="Bonacorsi S."/>
            <person name="Bouchier C."/>
            <person name="Bouvet O."/>
            <person name="Calteau A."/>
            <person name="Chiapello H."/>
            <person name="Clermont O."/>
            <person name="Cruveiller S."/>
            <person name="Danchin A."/>
            <person name="Diard M."/>
            <person name="Dossat C."/>
            <person name="Karoui M.E."/>
            <person name="Frapy E."/>
            <person name="Garry L."/>
            <person name="Ghigo J.M."/>
            <person name="Gilles A.M."/>
            <person name="Johnson J."/>
            <person name="Le Bouguenec C."/>
            <person name="Lescat M."/>
            <person name="Mangenot S."/>
            <person name="Martinez-Jehanne V."/>
            <person name="Matic I."/>
            <person name="Nassif X."/>
            <person name="Oztas S."/>
            <person name="Petit M.A."/>
            <person name="Pichon C."/>
            <person name="Rouy Z."/>
            <person name="Ruf C.S."/>
            <person name="Schneider D."/>
            <person name="Tourret J."/>
            <person name="Vacherie B."/>
            <person name="Vallenet D."/>
            <person name="Medigue C."/>
            <person name="Rocha E.P.C."/>
            <person name="Denamur E."/>
        </authorList>
    </citation>
    <scope>NUCLEOTIDE SEQUENCE [LARGE SCALE GENOMIC DNA]</scope>
    <source>
        <strain>IAI1</strain>
    </source>
</reference>
<keyword id="KW-0067">ATP-binding</keyword>
<keyword id="KW-0378">Hydrolase</keyword>
<keyword id="KW-0460">Magnesium</keyword>
<keyword id="KW-0479">Metal-binding</keyword>
<keyword id="KW-0511">Multifunctional enzyme</keyword>
<keyword id="KW-0533">Nickel</keyword>
<keyword id="KW-0547">Nucleotide-binding</keyword>
<keyword id="KW-0548">Nucleotidyltransferase</keyword>
<keyword id="KW-0692">RNA repair</keyword>
<keyword id="KW-0694">RNA-binding</keyword>
<keyword id="KW-0808">Transferase</keyword>
<keyword id="KW-0819">tRNA processing</keyword>
<feature type="chain" id="PRO_1000140033" description="Multifunctional CCA protein">
    <location>
        <begin position="1"/>
        <end position="412"/>
    </location>
</feature>
<feature type="domain" description="HD" evidence="1">
    <location>
        <begin position="228"/>
        <end position="329"/>
    </location>
</feature>
<feature type="binding site" evidence="1">
    <location>
        <position position="8"/>
    </location>
    <ligand>
        <name>ATP</name>
        <dbReference type="ChEBI" id="CHEBI:30616"/>
    </ligand>
</feature>
<feature type="binding site" evidence="1">
    <location>
        <position position="8"/>
    </location>
    <ligand>
        <name>CTP</name>
        <dbReference type="ChEBI" id="CHEBI:37563"/>
    </ligand>
</feature>
<feature type="binding site" evidence="1">
    <location>
        <position position="11"/>
    </location>
    <ligand>
        <name>ATP</name>
        <dbReference type="ChEBI" id="CHEBI:30616"/>
    </ligand>
</feature>
<feature type="binding site" evidence="1">
    <location>
        <position position="11"/>
    </location>
    <ligand>
        <name>CTP</name>
        <dbReference type="ChEBI" id="CHEBI:37563"/>
    </ligand>
</feature>
<feature type="binding site" evidence="1">
    <location>
        <position position="21"/>
    </location>
    <ligand>
        <name>Mg(2+)</name>
        <dbReference type="ChEBI" id="CHEBI:18420"/>
    </ligand>
</feature>
<feature type="binding site" evidence="1">
    <location>
        <position position="23"/>
    </location>
    <ligand>
        <name>Mg(2+)</name>
        <dbReference type="ChEBI" id="CHEBI:18420"/>
    </ligand>
</feature>
<feature type="binding site" evidence="1">
    <location>
        <position position="91"/>
    </location>
    <ligand>
        <name>ATP</name>
        <dbReference type="ChEBI" id="CHEBI:30616"/>
    </ligand>
</feature>
<feature type="binding site" evidence="1">
    <location>
        <position position="91"/>
    </location>
    <ligand>
        <name>CTP</name>
        <dbReference type="ChEBI" id="CHEBI:37563"/>
    </ligand>
</feature>
<feature type="binding site" evidence="1">
    <location>
        <position position="137"/>
    </location>
    <ligand>
        <name>ATP</name>
        <dbReference type="ChEBI" id="CHEBI:30616"/>
    </ligand>
</feature>
<feature type="binding site" evidence="1">
    <location>
        <position position="137"/>
    </location>
    <ligand>
        <name>CTP</name>
        <dbReference type="ChEBI" id="CHEBI:37563"/>
    </ligand>
</feature>
<feature type="binding site" evidence="1">
    <location>
        <position position="140"/>
    </location>
    <ligand>
        <name>ATP</name>
        <dbReference type="ChEBI" id="CHEBI:30616"/>
    </ligand>
</feature>
<feature type="binding site" evidence="1">
    <location>
        <position position="140"/>
    </location>
    <ligand>
        <name>CTP</name>
        <dbReference type="ChEBI" id="CHEBI:37563"/>
    </ligand>
</feature>